<protein>
    <recommendedName>
        <fullName>G/T mismatch-specific thymine DNA glycosylase</fullName>
        <ecNumber>3.2.2.29</ecNumber>
    </recommendedName>
    <alternativeName>
        <fullName>C-JUN leucine zipper interactive protein JZA-3</fullName>
    </alternativeName>
    <alternativeName>
        <fullName>Thymine-DNA glycosylase</fullName>
    </alternativeName>
</protein>
<accession>P56581</accession>
<accession>Q3TPW4</accession>
<accession>Q542A9</accession>
<accession>Q5U3M4</accession>
<accession>Q5U3M5</accession>
<accession>Q6PJW4</accession>
<accession>Q8BPK0</accession>
<reference key="1">
    <citation type="journal article" date="1998" name="J. Biol. Chem.">
        <title>Retinoic acid receptors interact physically and functionally with the T:G mismatch-specific thymine-DNA glycosylase.</title>
        <authorList>
            <person name="Um S."/>
            <person name="Harbers M."/>
            <person name="Benecke A."/>
            <person name="Pierrat B."/>
            <person name="Losson R."/>
            <person name="Chambon P."/>
        </authorList>
    </citation>
    <scope>NUCLEOTIDE SEQUENCE [MRNA] (ISOFORM 2)</scope>
</reference>
<reference key="2">
    <citation type="journal article" date="2005" name="Science">
        <title>The transcriptional landscape of the mammalian genome.</title>
        <authorList>
            <person name="Carninci P."/>
            <person name="Kasukawa T."/>
            <person name="Katayama S."/>
            <person name="Gough J."/>
            <person name="Frith M.C."/>
            <person name="Maeda N."/>
            <person name="Oyama R."/>
            <person name="Ravasi T."/>
            <person name="Lenhard B."/>
            <person name="Wells C."/>
            <person name="Kodzius R."/>
            <person name="Shimokawa K."/>
            <person name="Bajic V.B."/>
            <person name="Brenner S.E."/>
            <person name="Batalov S."/>
            <person name="Forrest A.R."/>
            <person name="Zavolan M."/>
            <person name="Davis M.J."/>
            <person name="Wilming L.G."/>
            <person name="Aidinis V."/>
            <person name="Allen J.E."/>
            <person name="Ambesi-Impiombato A."/>
            <person name="Apweiler R."/>
            <person name="Aturaliya R.N."/>
            <person name="Bailey T.L."/>
            <person name="Bansal M."/>
            <person name="Baxter L."/>
            <person name="Beisel K.W."/>
            <person name="Bersano T."/>
            <person name="Bono H."/>
            <person name="Chalk A.M."/>
            <person name="Chiu K.P."/>
            <person name="Choudhary V."/>
            <person name="Christoffels A."/>
            <person name="Clutterbuck D.R."/>
            <person name="Crowe M.L."/>
            <person name="Dalla E."/>
            <person name="Dalrymple B.P."/>
            <person name="de Bono B."/>
            <person name="Della Gatta G."/>
            <person name="di Bernardo D."/>
            <person name="Down T."/>
            <person name="Engstrom P."/>
            <person name="Fagiolini M."/>
            <person name="Faulkner G."/>
            <person name="Fletcher C.F."/>
            <person name="Fukushima T."/>
            <person name="Furuno M."/>
            <person name="Futaki S."/>
            <person name="Gariboldi M."/>
            <person name="Georgii-Hemming P."/>
            <person name="Gingeras T.R."/>
            <person name="Gojobori T."/>
            <person name="Green R.E."/>
            <person name="Gustincich S."/>
            <person name="Harbers M."/>
            <person name="Hayashi Y."/>
            <person name="Hensch T.K."/>
            <person name="Hirokawa N."/>
            <person name="Hill D."/>
            <person name="Huminiecki L."/>
            <person name="Iacono M."/>
            <person name="Ikeo K."/>
            <person name="Iwama A."/>
            <person name="Ishikawa T."/>
            <person name="Jakt M."/>
            <person name="Kanapin A."/>
            <person name="Katoh M."/>
            <person name="Kawasawa Y."/>
            <person name="Kelso J."/>
            <person name="Kitamura H."/>
            <person name="Kitano H."/>
            <person name="Kollias G."/>
            <person name="Krishnan S.P."/>
            <person name="Kruger A."/>
            <person name="Kummerfeld S.K."/>
            <person name="Kurochkin I.V."/>
            <person name="Lareau L.F."/>
            <person name="Lazarevic D."/>
            <person name="Lipovich L."/>
            <person name="Liu J."/>
            <person name="Liuni S."/>
            <person name="McWilliam S."/>
            <person name="Madan Babu M."/>
            <person name="Madera M."/>
            <person name="Marchionni L."/>
            <person name="Matsuda H."/>
            <person name="Matsuzawa S."/>
            <person name="Miki H."/>
            <person name="Mignone F."/>
            <person name="Miyake S."/>
            <person name="Morris K."/>
            <person name="Mottagui-Tabar S."/>
            <person name="Mulder N."/>
            <person name="Nakano N."/>
            <person name="Nakauchi H."/>
            <person name="Ng P."/>
            <person name="Nilsson R."/>
            <person name="Nishiguchi S."/>
            <person name="Nishikawa S."/>
            <person name="Nori F."/>
            <person name="Ohara O."/>
            <person name="Okazaki Y."/>
            <person name="Orlando V."/>
            <person name="Pang K.C."/>
            <person name="Pavan W.J."/>
            <person name="Pavesi G."/>
            <person name="Pesole G."/>
            <person name="Petrovsky N."/>
            <person name="Piazza S."/>
            <person name="Reed J."/>
            <person name="Reid J.F."/>
            <person name="Ring B.Z."/>
            <person name="Ringwald M."/>
            <person name="Rost B."/>
            <person name="Ruan Y."/>
            <person name="Salzberg S.L."/>
            <person name="Sandelin A."/>
            <person name="Schneider C."/>
            <person name="Schoenbach C."/>
            <person name="Sekiguchi K."/>
            <person name="Semple C.A."/>
            <person name="Seno S."/>
            <person name="Sessa L."/>
            <person name="Sheng Y."/>
            <person name="Shibata Y."/>
            <person name="Shimada H."/>
            <person name="Shimada K."/>
            <person name="Silva D."/>
            <person name="Sinclair B."/>
            <person name="Sperling S."/>
            <person name="Stupka E."/>
            <person name="Sugiura K."/>
            <person name="Sultana R."/>
            <person name="Takenaka Y."/>
            <person name="Taki K."/>
            <person name="Tammoja K."/>
            <person name="Tan S.L."/>
            <person name="Tang S."/>
            <person name="Taylor M.S."/>
            <person name="Tegner J."/>
            <person name="Teichmann S.A."/>
            <person name="Ueda H.R."/>
            <person name="van Nimwegen E."/>
            <person name="Verardo R."/>
            <person name="Wei C.L."/>
            <person name="Yagi K."/>
            <person name="Yamanishi H."/>
            <person name="Zabarovsky E."/>
            <person name="Zhu S."/>
            <person name="Zimmer A."/>
            <person name="Hide W."/>
            <person name="Bult C."/>
            <person name="Grimmond S.M."/>
            <person name="Teasdale R.D."/>
            <person name="Liu E.T."/>
            <person name="Brusic V."/>
            <person name="Quackenbush J."/>
            <person name="Wahlestedt C."/>
            <person name="Mattick J.S."/>
            <person name="Hume D.A."/>
            <person name="Kai C."/>
            <person name="Sasaki D."/>
            <person name="Tomaru Y."/>
            <person name="Fukuda S."/>
            <person name="Kanamori-Katayama M."/>
            <person name="Suzuki M."/>
            <person name="Aoki J."/>
            <person name="Arakawa T."/>
            <person name="Iida J."/>
            <person name="Imamura K."/>
            <person name="Itoh M."/>
            <person name="Kato T."/>
            <person name="Kawaji H."/>
            <person name="Kawagashira N."/>
            <person name="Kawashima T."/>
            <person name="Kojima M."/>
            <person name="Kondo S."/>
            <person name="Konno H."/>
            <person name="Nakano K."/>
            <person name="Ninomiya N."/>
            <person name="Nishio T."/>
            <person name="Okada M."/>
            <person name="Plessy C."/>
            <person name="Shibata K."/>
            <person name="Shiraki T."/>
            <person name="Suzuki S."/>
            <person name="Tagami M."/>
            <person name="Waki K."/>
            <person name="Watahiki A."/>
            <person name="Okamura-Oho Y."/>
            <person name="Suzuki H."/>
            <person name="Kawai J."/>
            <person name="Hayashizaki Y."/>
        </authorList>
    </citation>
    <scope>NUCLEOTIDE SEQUENCE [LARGE SCALE MRNA] (ISOFORMS 1 AND 2)</scope>
    <source>
        <strain>C57BL/6J</strain>
        <strain>NOD</strain>
        <tissue>Eye</tissue>
        <tissue>Spinal cord</tissue>
        <tissue>Stomach</tissue>
        <tissue>Thymus</tissue>
    </source>
</reference>
<reference key="3">
    <citation type="journal article" date="2009" name="PLoS Biol.">
        <title>Lineage-specific biology revealed by a finished genome assembly of the mouse.</title>
        <authorList>
            <person name="Church D.M."/>
            <person name="Goodstadt L."/>
            <person name="Hillier L.W."/>
            <person name="Zody M.C."/>
            <person name="Goldstein S."/>
            <person name="She X."/>
            <person name="Bult C.J."/>
            <person name="Agarwala R."/>
            <person name="Cherry J.L."/>
            <person name="DiCuccio M."/>
            <person name="Hlavina W."/>
            <person name="Kapustin Y."/>
            <person name="Meric P."/>
            <person name="Maglott D."/>
            <person name="Birtle Z."/>
            <person name="Marques A.C."/>
            <person name="Graves T."/>
            <person name="Zhou S."/>
            <person name="Teague B."/>
            <person name="Potamousis K."/>
            <person name="Churas C."/>
            <person name="Place M."/>
            <person name="Herschleb J."/>
            <person name="Runnheim R."/>
            <person name="Forrest D."/>
            <person name="Amos-Landgraf J."/>
            <person name="Schwartz D.C."/>
            <person name="Cheng Z."/>
            <person name="Lindblad-Toh K."/>
            <person name="Eichler E.E."/>
            <person name="Ponting C.P."/>
        </authorList>
    </citation>
    <scope>NUCLEOTIDE SEQUENCE [LARGE SCALE GENOMIC DNA]</scope>
    <source>
        <strain>C57BL/6J</strain>
    </source>
</reference>
<reference key="4">
    <citation type="submission" date="2005-07" db="EMBL/GenBank/DDBJ databases">
        <authorList>
            <person name="Mural R.J."/>
            <person name="Adams M.D."/>
            <person name="Myers E.W."/>
            <person name="Smith H.O."/>
            <person name="Venter J.C."/>
        </authorList>
    </citation>
    <scope>NUCLEOTIDE SEQUENCE [LARGE SCALE GENOMIC DNA]</scope>
</reference>
<reference key="5">
    <citation type="journal article" date="2004" name="Genome Res.">
        <title>The status, quality, and expansion of the NIH full-length cDNA project: the Mammalian Gene Collection (MGC).</title>
        <authorList>
            <consortium name="The MGC Project Team"/>
        </authorList>
    </citation>
    <scope>NUCLEOTIDE SEQUENCE [LARGE SCALE MRNA] (ISOFORM 1)</scope>
    <source>
        <strain>C57BL/6J</strain>
        <strain>FVB/N</strain>
        <tissue>Brain</tissue>
        <tissue>Mammary tumor</tissue>
    </source>
</reference>
<reference key="6">
    <citation type="journal article" date="1992" name="Proc. Natl. Acad. Sci. U.S.A.">
        <title>Protein interaction cloning in yeast: identification of mammalian proteins that react with the leucine zipper of Jun.</title>
        <authorList>
            <person name="Chevray P.M."/>
            <person name="Nathans D."/>
        </authorList>
    </citation>
    <scope>NUCLEOTIDE SEQUENCE [MRNA] OF 249-397</scope>
    <source>
        <strain>CD-1</strain>
        <tissue>Embryo</tissue>
    </source>
</reference>
<reference key="7">
    <citation type="journal article" date="2011" name="Cell">
        <title>Thymine DNA glycosylase is essential for active DNA demethylation by linked deamination-base excision repair.</title>
        <authorList>
            <person name="Cortellino S."/>
            <person name="Xu J."/>
            <person name="Sannai M."/>
            <person name="Moore R."/>
            <person name="Caretti E."/>
            <person name="Cigliano A."/>
            <person name="Le Coz M."/>
            <person name="Devarajan K."/>
            <person name="Wessels A."/>
            <person name="Soprano D."/>
            <person name="Abramowitz L.K."/>
            <person name="Bartolomei M.S."/>
            <person name="Rambow F."/>
            <person name="Bassi M.R."/>
            <person name="Bruno T."/>
            <person name="Fanciulli M."/>
            <person name="Renner C."/>
            <person name="Klein-Szanto A.J."/>
            <person name="Matsumoto Y."/>
            <person name="Kobi D."/>
            <person name="Davidson I."/>
            <person name="Alberti C."/>
            <person name="Larue L."/>
            <person name="Bellacosa A."/>
        </authorList>
    </citation>
    <scope>FUNCTION</scope>
    <scope>DISRUPTION PHENOTYPE</scope>
    <scope>MUTAGENESIS OF ASN-151</scope>
</reference>
<reference key="8">
    <citation type="journal article" date="2011" name="Nature">
        <title>Embryonic lethal phenotype reveals a function of TDG in maintaining epigenetic stability.</title>
        <authorList>
            <person name="Cortazar D."/>
            <person name="Kunz C."/>
            <person name="Selfridge J."/>
            <person name="Lettieri T."/>
            <person name="Saito Y."/>
            <person name="MacDougall E."/>
            <person name="Wirz A."/>
            <person name="Schuermann D."/>
            <person name="Jacobs A.L."/>
            <person name="Siegrist F."/>
            <person name="Steinacher R."/>
            <person name="Jiricny J."/>
            <person name="Bird A."/>
            <person name="Schar P."/>
        </authorList>
    </citation>
    <scope>FUNCTION</scope>
    <scope>DISRUPTION PHENOTYPE</scope>
    <scope>MUTAGENESIS OF ASN-151</scope>
</reference>
<reference key="9">
    <citation type="journal article" date="2011" name="Science">
        <title>Tet-mediated formation of 5-carboxylcytosine and its excision by TDG in mammalian DNA.</title>
        <authorList>
            <person name="He Y.F."/>
            <person name="Li B.Z."/>
            <person name="Li Z."/>
            <person name="Liu P."/>
            <person name="Wang Y."/>
            <person name="Tang Q."/>
            <person name="Ding J."/>
            <person name="Jia Y."/>
            <person name="Chen Z."/>
            <person name="Li L."/>
            <person name="Sun Y."/>
            <person name="Li X."/>
            <person name="Dai Q."/>
            <person name="Song C.X."/>
            <person name="Zhang K."/>
            <person name="He C."/>
            <person name="Xu G.L."/>
        </authorList>
    </citation>
    <scope>FUNCTION</scope>
    <scope>MUTAGENESIS OF ASN-151</scope>
</reference>
<gene>
    <name type="primary">Tdg</name>
</gene>
<name>TDG_MOUSE</name>
<evidence type="ECO:0000250" key="1"/>
<evidence type="ECO:0000250" key="2">
    <source>
        <dbReference type="UniProtKB" id="Q13569"/>
    </source>
</evidence>
<evidence type="ECO:0000256" key="3">
    <source>
        <dbReference type="SAM" id="MobiDB-lite"/>
    </source>
</evidence>
<evidence type="ECO:0000269" key="4">
    <source>
    </source>
</evidence>
<evidence type="ECO:0000269" key="5">
    <source>
    </source>
</evidence>
<evidence type="ECO:0000269" key="6">
    <source>
    </source>
</evidence>
<evidence type="ECO:0000303" key="7">
    <source>
    </source>
</evidence>
<evidence type="ECO:0000303" key="8">
    <source>
    </source>
</evidence>
<evidence type="ECO:0000305" key="9"/>
<sequence length="421" mass="46879">MDAEAARSYSLEQVQALYSFPFQQMMAEVPNMAVTTGQQVPAVAPNMATVTEQQVPEDAPVQEPAPEAPKRRKRKPRAAEPQEPVEPKKPATSKKSGKSTKSKEKQEKITDAFKVKRKVDRFNGVSEAELLTKTLPDILTFNLDIVIIGINPGLMAAYKGHHYPGPGNHFWKCLFMSGLSEVQLNHMDDHTLPGKYGIGFTNMVERTTPGSKDLSSKEFREGGRILVQKLQKYQPRIAVFNGKCIYEIFSKEVFGVKVKNLEFGLQPHKIPDTETLCYVMPSSSARCAQFPRAQDKVHYYIKLKDLRDQLKGIERNADVQEVQYTFDLQLAQEDAKKMAVKEEKYDPGYEAAYGGAYGENPCNGEPCGIASNGLTAHSAEPRGEAAPSDVPNGQWMAQSFAEQIPSFNNCGTREQEEESHA</sequence>
<keyword id="KW-0010">Activator</keyword>
<keyword id="KW-0025">Alternative splicing</keyword>
<keyword id="KW-0156">Chromatin regulator</keyword>
<keyword id="KW-0227">DNA damage</keyword>
<keyword id="KW-0234">DNA repair</keyword>
<keyword id="KW-0378">Hydrolase</keyword>
<keyword id="KW-1017">Isopeptide bond</keyword>
<keyword id="KW-0539">Nucleus</keyword>
<keyword id="KW-1185">Reference proteome</keyword>
<keyword id="KW-0804">Transcription</keyword>
<keyword id="KW-0805">Transcription regulation</keyword>
<keyword id="KW-0832">Ubl conjugation</keyword>
<feature type="chain" id="PRO_0000185778" description="G/T mismatch-specific thymine DNA glycosylase">
    <location>
        <begin position="1"/>
        <end position="421"/>
    </location>
</feature>
<feature type="region of interest" description="Disordered" evidence="3">
    <location>
        <begin position="45"/>
        <end position="108"/>
    </location>
</feature>
<feature type="compositionally biased region" description="Basic and acidic residues" evidence="3">
    <location>
        <begin position="77"/>
        <end position="89"/>
    </location>
</feature>
<feature type="compositionally biased region" description="Basic residues" evidence="3">
    <location>
        <begin position="91"/>
        <end position="100"/>
    </location>
</feature>
<feature type="cross-link" description="Glycyl lysine isopeptide (Lys-Gly) (interchain with G-Cter in SUMO2)" evidence="2">
    <location>
        <position position="114"/>
    </location>
</feature>
<feature type="cross-link" description="Glycyl lysine isopeptide (Lys-Gly) (interchain with G-Cter in SUMO2)" evidence="2">
    <location>
        <position position="259"/>
    </location>
</feature>
<feature type="cross-link" description="Glycyl lysine isopeptide (Lys-Gly) (interchain with G-Cter in SUMO); alternate" evidence="1">
    <location>
        <position position="341"/>
    </location>
</feature>
<feature type="cross-link" description="Glycyl lysine isopeptide (Lys-Gly) (interchain with G-Cter in SUMO2); alternate" evidence="2">
    <location>
        <position position="341"/>
    </location>
</feature>
<feature type="splice variant" id="VSP_046491" description="In isoform 2." evidence="7 8">
    <location>
        <begin position="1"/>
        <end position="24"/>
    </location>
</feature>
<feature type="mutagenesis site" description="Loss of DNA glycosylase activity." evidence="4 5 6">
    <original>N</original>
    <variation>A</variation>
    <location>
        <position position="151"/>
    </location>
</feature>
<feature type="sequence conflict" description="In Ref. 1; AAC31900, 2; BAC40994/BAE41355, 4; EDL04997 and 5; AAH10315." evidence="9" ref="1 2 4 5">
    <original>E</original>
    <variation>A</variation>
    <location>
        <position position="57"/>
    </location>
</feature>
<feature type="sequence conflict" description="In Ref. 5; AAH85470." evidence="9" ref="5">
    <original>S</original>
    <variation>I</variation>
    <location>
        <position position="216"/>
    </location>
</feature>
<feature type="sequence conflict" description="In Ref. 2; BAC35566." evidence="9" ref="2">
    <original>K</original>
    <variation>E</variation>
    <location>
        <position position="232"/>
    </location>
</feature>
<feature type="sequence conflict" description="In Ref. 1; AAC31900, 2; BAC40994/BAE41355, 4; EDL04997 and 5; AAH10315." evidence="9" ref="1 2 4 5">
    <original>A</original>
    <variation>T</variation>
    <location>
        <position position="317"/>
    </location>
</feature>
<feature type="sequence conflict" description="In Ref. 1; AAC31900, 2; BAC40994/BAE41355, 4; EDL04997 and 5; AAH10315." evidence="9" ref="1 2 4 5">
    <original>APS</original>
    <variation>TPG</variation>
    <location>
        <begin position="386"/>
        <end position="388"/>
    </location>
</feature>
<dbReference type="EC" id="3.2.2.29"/>
<dbReference type="EMBL" id="AF069519">
    <property type="protein sequence ID" value="AAC31900.1"/>
    <property type="molecule type" value="mRNA"/>
</dbReference>
<dbReference type="EMBL" id="AK053870">
    <property type="protein sequence ID" value="BAC35566.1"/>
    <property type="molecule type" value="mRNA"/>
</dbReference>
<dbReference type="EMBL" id="AK089915">
    <property type="protein sequence ID" value="BAC40994.1"/>
    <property type="molecule type" value="mRNA"/>
</dbReference>
<dbReference type="EMBL" id="AK164090">
    <property type="protein sequence ID" value="BAE37621.1"/>
    <property type="molecule type" value="mRNA"/>
</dbReference>
<dbReference type="EMBL" id="AK164643">
    <property type="protein sequence ID" value="BAE37857.1"/>
    <property type="molecule type" value="mRNA"/>
</dbReference>
<dbReference type="EMBL" id="AK169768">
    <property type="protein sequence ID" value="BAE41355.1"/>
    <property type="molecule type" value="mRNA"/>
</dbReference>
<dbReference type="EMBL" id="AC152980">
    <property type="status" value="NOT_ANNOTATED_CDS"/>
    <property type="molecule type" value="Genomic_DNA"/>
</dbReference>
<dbReference type="EMBL" id="CH466540">
    <property type="protein sequence ID" value="EDL04997.1"/>
    <property type="molecule type" value="Genomic_DNA"/>
</dbReference>
<dbReference type="EMBL" id="BC010315">
    <property type="protein sequence ID" value="AAH10315.2"/>
    <property type="molecule type" value="mRNA"/>
</dbReference>
<dbReference type="EMBL" id="BC085470">
    <property type="protein sequence ID" value="AAH85470.1"/>
    <property type="molecule type" value="mRNA"/>
</dbReference>
<dbReference type="EMBL" id="BC085471">
    <property type="protein sequence ID" value="AAH85471.1"/>
    <property type="molecule type" value="mRNA"/>
</dbReference>
<dbReference type="CCDS" id="CCDS24070.1">
    <molecule id="P56581-1"/>
</dbReference>
<dbReference type="CCDS" id="CCDS36013.1">
    <molecule id="P56581-2"/>
</dbReference>
<dbReference type="PIR" id="A46132">
    <property type="entry name" value="A46132"/>
</dbReference>
<dbReference type="RefSeq" id="NP_035691.2">
    <molecule id="P56581-2"/>
    <property type="nucleotide sequence ID" value="NM_011561.4"/>
</dbReference>
<dbReference type="RefSeq" id="NP_766140.2">
    <molecule id="P56581-1"/>
    <property type="nucleotide sequence ID" value="NM_172552.5"/>
</dbReference>
<dbReference type="SMR" id="P56581"/>
<dbReference type="BioGRID" id="204088">
    <property type="interactions" value="6"/>
</dbReference>
<dbReference type="DIP" id="DIP-216N"/>
<dbReference type="FunCoup" id="P56581">
    <property type="interactions" value="4101"/>
</dbReference>
<dbReference type="IntAct" id="P56581">
    <property type="interactions" value="2"/>
</dbReference>
<dbReference type="STRING" id="10090.ENSMUSP00000121000"/>
<dbReference type="iPTMnet" id="P56581"/>
<dbReference type="PhosphoSitePlus" id="P56581"/>
<dbReference type="PaxDb" id="10090-ENSMUSP00000121000"/>
<dbReference type="PeptideAtlas" id="P56581"/>
<dbReference type="ProteomicsDB" id="263026">
    <molecule id="P56581-1"/>
</dbReference>
<dbReference type="ProteomicsDB" id="263027">
    <molecule id="P56581-2"/>
</dbReference>
<dbReference type="Antibodypedia" id="30563">
    <property type="antibodies" value="413 antibodies from 32 providers"/>
</dbReference>
<dbReference type="DNASU" id="21665"/>
<dbReference type="Ensembl" id="ENSMUST00000092266.11">
    <molecule id="P56581-2"/>
    <property type="protein sequence ID" value="ENSMUSP00000089917.5"/>
    <property type="gene ID" value="ENSMUSG00000034674.19"/>
</dbReference>
<dbReference type="Ensembl" id="ENSMUST00000151390.8">
    <molecule id="P56581-1"/>
    <property type="protein sequence ID" value="ENSMUSP00000121000.2"/>
    <property type="gene ID" value="ENSMUSG00000034674.19"/>
</dbReference>
<dbReference type="GeneID" id="21665"/>
<dbReference type="KEGG" id="mmu:21665"/>
<dbReference type="UCSC" id="uc007gjr.2">
    <molecule id="P56581-1"/>
    <property type="organism name" value="mouse"/>
</dbReference>
<dbReference type="AGR" id="MGI:108247"/>
<dbReference type="CTD" id="6996"/>
<dbReference type="MGI" id="MGI:108247">
    <property type="gene designation" value="Tdg"/>
</dbReference>
<dbReference type="VEuPathDB" id="HostDB:ENSMUSG00000034674"/>
<dbReference type="eggNOG" id="KOG4120">
    <property type="taxonomic scope" value="Eukaryota"/>
</dbReference>
<dbReference type="GeneTree" id="ENSGT00390000000987"/>
<dbReference type="HOGENOM" id="CLU_045775_1_0_1"/>
<dbReference type="InParanoid" id="P56581"/>
<dbReference type="OMA" id="FYPFPFH"/>
<dbReference type="OrthoDB" id="565731at2759"/>
<dbReference type="PhylomeDB" id="P56581"/>
<dbReference type="TreeFam" id="TF328764"/>
<dbReference type="Reactome" id="R-MMU-110329">
    <property type="pathway name" value="Cleavage of the damaged pyrimidine"/>
</dbReference>
<dbReference type="Reactome" id="R-MMU-110357">
    <property type="pathway name" value="Displacement of DNA glycosylase by APEX1"/>
</dbReference>
<dbReference type="Reactome" id="R-MMU-3108214">
    <property type="pathway name" value="SUMOylation of DNA damage response and repair proteins"/>
</dbReference>
<dbReference type="Reactome" id="R-MMU-5221030">
    <property type="pathway name" value="TET1,2,3 and TDG demethylate DNA"/>
</dbReference>
<dbReference type="BioGRID-ORCS" id="21665">
    <property type="hits" value="4 hits in 118 CRISPR screens"/>
</dbReference>
<dbReference type="ChiTaRS" id="Tdg">
    <property type="organism name" value="mouse"/>
</dbReference>
<dbReference type="PRO" id="PR:P56581"/>
<dbReference type="Proteomes" id="UP000000589">
    <property type="component" value="Chromosome 10"/>
</dbReference>
<dbReference type="RNAct" id="P56581">
    <property type="molecule type" value="protein"/>
</dbReference>
<dbReference type="Bgee" id="ENSMUSG00000034674">
    <property type="expression patterns" value="Expressed in ganglionic eminence and 134 other cell types or tissues"/>
</dbReference>
<dbReference type="ExpressionAtlas" id="P56581">
    <property type="expression patterns" value="baseline and differential"/>
</dbReference>
<dbReference type="GO" id="GO:0005634">
    <property type="term" value="C:nucleus"/>
    <property type="evidence" value="ECO:0000314"/>
    <property type="project" value="MGI"/>
</dbReference>
<dbReference type="GO" id="GO:0005886">
    <property type="term" value="C:plasma membrane"/>
    <property type="evidence" value="ECO:0007669"/>
    <property type="project" value="Ensembl"/>
</dbReference>
<dbReference type="GO" id="GO:0016605">
    <property type="term" value="C:PML body"/>
    <property type="evidence" value="ECO:0000314"/>
    <property type="project" value="MGI"/>
</dbReference>
<dbReference type="GO" id="GO:0005524">
    <property type="term" value="F:ATP binding"/>
    <property type="evidence" value="ECO:0007669"/>
    <property type="project" value="Ensembl"/>
</dbReference>
<dbReference type="GO" id="GO:0031404">
    <property type="term" value="F:chloride ion binding"/>
    <property type="evidence" value="ECO:0007669"/>
    <property type="project" value="Ensembl"/>
</dbReference>
<dbReference type="GO" id="GO:0003677">
    <property type="term" value="F:DNA binding"/>
    <property type="evidence" value="ECO:0000314"/>
    <property type="project" value="UniProtKB"/>
</dbReference>
<dbReference type="GO" id="GO:0019104">
    <property type="term" value="F:DNA N-glycosylase activity"/>
    <property type="evidence" value="ECO:0000314"/>
    <property type="project" value="UniProtKB"/>
</dbReference>
<dbReference type="GO" id="GO:0140297">
    <property type="term" value="F:DNA-binding transcription factor binding"/>
    <property type="evidence" value="ECO:0007669"/>
    <property type="project" value="Ensembl"/>
</dbReference>
<dbReference type="GO" id="GO:0003690">
    <property type="term" value="F:double-stranded DNA binding"/>
    <property type="evidence" value="ECO:0000250"/>
    <property type="project" value="UniProtKB"/>
</dbReference>
<dbReference type="GO" id="GO:0141016">
    <property type="term" value="F:G/T mismatch-specific thymine-DNA glycosylase activity"/>
    <property type="evidence" value="ECO:0007669"/>
    <property type="project" value="UniProtKB-EC"/>
</dbReference>
<dbReference type="GO" id="GO:0043739">
    <property type="term" value="F:G/U mismatch-specific uracil-DNA glycosylase activity"/>
    <property type="evidence" value="ECO:0007669"/>
    <property type="project" value="Ensembl"/>
</dbReference>
<dbReference type="GO" id="GO:0000287">
    <property type="term" value="F:magnesium ion binding"/>
    <property type="evidence" value="ECO:0007669"/>
    <property type="project" value="Ensembl"/>
</dbReference>
<dbReference type="GO" id="GO:0030983">
    <property type="term" value="F:mismatched DNA binding"/>
    <property type="evidence" value="ECO:0000250"/>
    <property type="project" value="UniProtKB"/>
</dbReference>
<dbReference type="GO" id="GO:0019904">
    <property type="term" value="F:protein domain specific binding"/>
    <property type="evidence" value="ECO:0007669"/>
    <property type="project" value="Ensembl"/>
</dbReference>
<dbReference type="GO" id="GO:0005080">
    <property type="term" value="F:protein kinase C binding"/>
    <property type="evidence" value="ECO:0000353"/>
    <property type="project" value="MGI"/>
</dbReference>
<dbReference type="GO" id="GO:0031402">
    <property type="term" value="F:sodium ion binding"/>
    <property type="evidence" value="ECO:0007669"/>
    <property type="project" value="Ensembl"/>
</dbReference>
<dbReference type="GO" id="GO:0032183">
    <property type="term" value="F:SUMO binding"/>
    <property type="evidence" value="ECO:0000353"/>
    <property type="project" value="MGI"/>
</dbReference>
<dbReference type="GO" id="GO:0003712">
    <property type="term" value="F:transcription coregulator activity"/>
    <property type="evidence" value="ECO:0000316"/>
    <property type="project" value="MGI"/>
</dbReference>
<dbReference type="GO" id="GO:0006284">
    <property type="term" value="P:base-excision repair"/>
    <property type="evidence" value="ECO:0000314"/>
    <property type="project" value="UniProtKB"/>
</dbReference>
<dbReference type="GO" id="GO:0006285">
    <property type="term" value="P:base-excision repair, AP site formation"/>
    <property type="evidence" value="ECO:0007669"/>
    <property type="project" value="InterPro"/>
</dbReference>
<dbReference type="GO" id="GO:0040029">
    <property type="term" value="P:epigenetic regulation of gene expression"/>
    <property type="evidence" value="ECO:0000315"/>
    <property type="project" value="UniProtKB"/>
</dbReference>
<dbReference type="GO" id="GO:0000122">
    <property type="term" value="P:negative regulation of transcription by RNA polymerase II"/>
    <property type="evidence" value="ECO:0000315"/>
    <property type="project" value="MGI"/>
</dbReference>
<dbReference type="GO" id="GO:0045995">
    <property type="term" value="P:regulation of embryonic development"/>
    <property type="evidence" value="ECO:0000315"/>
    <property type="project" value="UniProtKB"/>
</dbReference>
<dbReference type="CDD" id="cd10028">
    <property type="entry name" value="UDG-F2_TDG_MUG"/>
    <property type="match status" value="1"/>
</dbReference>
<dbReference type="FunFam" id="3.40.470.10:FF:000002">
    <property type="entry name" value="G/T mismatch-specific thymine DNA glycosylase"/>
    <property type="match status" value="1"/>
</dbReference>
<dbReference type="Gene3D" id="3.40.470.10">
    <property type="entry name" value="Uracil-DNA glycosylase-like domain"/>
    <property type="match status" value="1"/>
</dbReference>
<dbReference type="InterPro" id="IPR015637">
    <property type="entry name" value="MUG/TDG"/>
</dbReference>
<dbReference type="InterPro" id="IPR003310">
    <property type="entry name" value="TDG-like_euk"/>
</dbReference>
<dbReference type="InterPro" id="IPR005122">
    <property type="entry name" value="Uracil-DNA_glycosylase-like"/>
</dbReference>
<dbReference type="InterPro" id="IPR036895">
    <property type="entry name" value="Uracil-DNA_glycosylase-like_sf"/>
</dbReference>
<dbReference type="NCBIfam" id="TIGR00584">
    <property type="entry name" value="mug"/>
    <property type="match status" value="1"/>
</dbReference>
<dbReference type="PANTHER" id="PTHR12159">
    <property type="entry name" value="G/T AND G/U MISMATCH-SPECIFIC DNA GLYCOSYLASE"/>
    <property type="match status" value="1"/>
</dbReference>
<dbReference type="PANTHER" id="PTHR12159:SF9">
    <property type="entry name" value="G_T MISMATCH-SPECIFIC THYMINE DNA GLYCOSYLASE"/>
    <property type="match status" value="1"/>
</dbReference>
<dbReference type="Pfam" id="PF03167">
    <property type="entry name" value="UDG"/>
    <property type="match status" value="1"/>
</dbReference>
<dbReference type="SUPFAM" id="SSF52141">
    <property type="entry name" value="Uracil-DNA glycosylase-like"/>
    <property type="match status" value="1"/>
</dbReference>
<comment type="function">
    <text evidence="4 5 6">DNA glycosylase that plays a key role in active DNA demethylation: specifically recognizes and binds 5-formylcytosine (5fC) and 5-carboxylcytosine (5caC) in the context of CpG sites and mediates their excision through base-excision repair (BER) to install an unmethylated cytosine (PubMed:21817016). Cannot remove 5-hydroxymethylcytosine (5hmC). According to an alternative model, involved in DNA demethylation by mediating DNA glycolase activity toward 5-hydroxymethyluracil (5hmU) produced by deamination of 5hmC (PubMed:21722948). Also involved in DNA repair by acting as a thymine-DNA glycosylase that mediates correction of G/T mispairs to G/C pairs: in the DNA of higher eukaryotes, hydrolytic deamination of 5-methylcytosine to thymine leads to the formation of G/T mismatches. Its role in the repair of canonical base damage is however minor compared to its role in DNA demethylation. It is capable of hydrolyzing the carbon-nitrogen bond between the sugar-phosphate backbone of the DNA and a mispaired thymine. In addition to the G/T, it can remove thymine also from C/T and T/T mispairs in the order G/T &gt;&gt; C/T &gt; T/T. It has no detectable activity on apyrimidinic sites and does not catalyze the removal of thymine from A/T pairs or from single-stranded DNA. It can also remove uracil and 5-bromouracil from mispairs with guanine.</text>
</comment>
<comment type="catalytic activity">
    <reaction>
        <text>Hydrolyzes mismatched double-stranded DNA and polynucleotides, releasing free thymine.</text>
        <dbReference type="EC" id="3.2.2.29"/>
    </reaction>
</comment>
<comment type="subunit">
    <text evidence="1">Homodimer. Interacts with AICDA and GADD45A (By similarity).</text>
</comment>
<comment type="interaction">
    <interactant intactId="EBI-4320525">
        <id>P56581</id>
    </interactant>
    <interactant intactId="EBI-455189">
        <id>Q15788</id>
        <label>NCOA1</label>
    </interactant>
    <organismsDiffer>true</organismsDiffer>
    <experiments>4</experiments>
</comment>
<comment type="subcellular location">
    <subcellularLocation>
        <location evidence="1">Nucleus</location>
    </subcellularLocation>
</comment>
<comment type="alternative products">
    <event type="alternative splicing"/>
    <isoform>
        <id>P56581-1</id>
        <name>1</name>
        <sequence type="displayed"/>
    </isoform>
    <isoform>
        <id>P56581-2</id>
        <name>2</name>
        <sequence type="described" ref="VSP_046491"/>
    </isoform>
</comment>
<comment type="PTM">
    <text evidence="1">Sumoylation on Lys-341 by either SUMO1 or SUMO2 induces dissociation of the product DNA.</text>
</comment>
<comment type="disruption phenotype">
    <text evidence="4 5">Embryonic lethality between 10.5 and 12.5 dpc. Embryos display specific patterning defects of the developing heart; vasculogenesis defects of dorsal aortae, carotid arteries and branchial arteries. Global defects of angiogenesis are also observed. Defects are due to epigenetic aberrations affecting the expression of developmental genes, coincident with imbalanced histone modification and CpG methylation at promoters of affected genes.</text>
</comment>
<comment type="similarity">
    <text evidence="9">Belongs to the uracil-DNA glycosylase (UDG) superfamily. TDG/mug family.</text>
</comment>
<proteinExistence type="evidence at protein level"/>
<organism>
    <name type="scientific">Mus musculus</name>
    <name type="common">Mouse</name>
    <dbReference type="NCBI Taxonomy" id="10090"/>
    <lineage>
        <taxon>Eukaryota</taxon>
        <taxon>Metazoa</taxon>
        <taxon>Chordata</taxon>
        <taxon>Craniata</taxon>
        <taxon>Vertebrata</taxon>
        <taxon>Euteleostomi</taxon>
        <taxon>Mammalia</taxon>
        <taxon>Eutheria</taxon>
        <taxon>Euarchontoglires</taxon>
        <taxon>Glires</taxon>
        <taxon>Rodentia</taxon>
        <taxon>Myomorpha</taxon>
        <taxon>Muroidea</taxon>
        <taxon>Muridae</taxon>
        <taxon>Murinae</taxon>
        <taxon>Mus</taxon>
        <taxon>Mus</taxon>
    </lineage>
</organism>